<accession>Q87YC5</accession>
<sequence length="429" mass="46818">MRDELNKGLIDFLKASPTPFHATATLVQHFEAAGFQRLDERDTWAIETGGRYYVTRNDSSIVAIRMGRQSPLTGGIRMVGAHTDSPCLRVKPQPELQRQGFWQLGVEVYGGALLAPWFDRDLSLAGRVTFRRDGKVESQLIDFKLPIAVIPNLAIHLNRTANEGWTINPQNELPPILAQVAGDERADFRALLTDQLAREHGLNADVVLDYELSFYDTQSAAVVGLNGDFLAGARLDNLLSCFAGMQALLNTESDETALLVCTDHEEVGSSSACGADGAMLEQIVQRLLPSSEDYVRTIQKSLLISADNAHGIHPNYADKHDANHGPKLNAGPVIKVNSNQRYATNSETAGFFRHLCMAEEVPVQSFVVRSDMGCGSTIGPITASHLGIRTVDIGLPTFAMHSIRELAGSHDLAHLVKVLGAFYASHELP</sequence>
<protein>
    <recommendedName>
        <fullName evidence="1">Probable M18 family aminopeptidase 2</fullName>
        <ecNumber evidence="1">3.4.11.-</ecNumber>
    </recommendedName>
</protein>
<reference key="1">
    <citation type="journal article" date="2003" name="Proc. Natl. Acad. Sci. U.S.A.">
        <title>The complete genome sequence of the Arabidopsis and tomato pathogen Pseudomonas syringae pv. tomato DC3000.</title>
        <authorList>
            <person name="Buell C.R."/>
            <person name="Joardar V."/>
            <person name="Lindeberg M."/>
            <person name="Selengut J."/>
            <person name="Paulsen I.T."/>
            <person name="Gwinn M.L."/>
            <person name="Dodson R.J."/>
            <person name="DeBoy R.T."/>
            <person name="Durkin A.S."/>
            <person name="Kolonay J.F."/>
            <person name="Madupu R."/>
            <person name="Daugherty S.C."/>
            <person name="Brinkac L.M."/>
            <person name="Beanan M.J."/>
            <person name="Haft D.H."/>
            <person name="Nelson W.C."/>
            <person name="Davidsen T.M."/>
            <person name="Zafar N."/>
            <person name="Zhou L."/>
            <person name="Liu J."/>
            <person name="Yuan Q."/>
            <person name="Khouri H.M."/>
            <person name="Fedorova N.B."/>
            <person name="Tran B."/>
            <person name="Russell D."/>
            <person name="Berry K.J."/>
            <person name="Utterback T.R."/>
            <person name="Van Aken S.E."/>
            <person name="Feldblyum T.V."/>
            <person name="D'Ascenzo M."/>
            <person name="Deng W.-L."/>
            <person name="Ramos A.R."/>
            <person name="Alfano J.R."/>
            <person name="Cartinhour S."/>
            <person name="Chatterjee A.K."/>
            <person name="Delaney T.P."/>
            <person name="Lazarowitz S.G."/>
            <person name="Martin G.B."/>
            <person name="Schneider D.J."/>
            <person name="Tang X."/>
            <person name="Bender C.L."/>
            <person name="White O."/>
            <person name="Fraser C.M."/>
            <person name="Collmer A."/>
        </authorList>
    </citation>
    <scope>NUCLEOTIDE SEQUENCE [LARGE SCALE GENOMIC DNA]</scope>
    <source>
        <strain>ATCC BAA-871 / DC3000</strain>
    </source>
</reference>
<comment type="cofactor">
    <cofactor evidence="1">
        <name>Zn(2+)</name>
        <dbReference type="ChEBI" id="CHEBI:29105"/>
    </cofactor>
</comment>
<comment type="similarity">
    <text evidence="1">Belongs to the peptidase M18 family.</text>
</comment>
<organism>
    <name type="scientific">Pseudomonas syringae pv. tomato (strain ATCC BAA-871 / DC3000)</name>
    <dbReference type="NCBI Taxonomy" id="223283"/>
    <lineage>
        <taxon>Bacteria</taxon>
        <taxon>Pseudomonadati</taxon>
        <taxon>Pseudomonadota</taxon>
        <taxon>Gammaproteobacteria</taxon>
        <taxon>Pseudomonadales</taxon>
        <taxon>Pseudomonadaceae</taxon>
        <taxon>Pseudomonas</taxon>
    </lineage>
</organism>
<name>APEB_PSESM</name>
<gene>
    <name evidence="1" type="primary">apeB</name>
    <name type="ordered locus">PSPTO_3876</name>
</gene>
<keyword id="KW-0031">Aminopeptidase</keyword>
<keyword id="KW-0378">Hydrolase</keyword>
<keyword id="KW-0479">Metal-binding</keyword>
<keyword id="KW-0482">Metalloprotease</keyword>
<keyword id="KW-0645">Protease</keyword>
<keyword id="KW-1185">Reference proteome</keyword>
<keyword id="KW-0862">Zinc</keyword>
<proteinExistence type="inferred from homology"/>
<evidence type="ECO:0000255" key="1">
    <source>
        <dbReference type="HAMAP-Rule" id="MF_00467"/>
    </source>
</evidence>
<feature type="chain" id="PRO_0000173467" description="Probable M18 family aminopeptidase 2">
    <location>
        <begin position="1"/>
        <end position="429"/>
    </location>
</feature>
<feature type="binding site" evidence="1">
    <location>
        <position position="82"/>
    </location>
    <ligand>
        <name>Zn(2+)</name>
        <dbReference type="ChEBI" id="CHEBI:29105"/>
    </ligand>
</feature>
<feature type="binding site" evidence="1">
    <location>
        <position position="156"/>
    </location>
    <ligand>
        <name>Zn(2+)</name>
        <dbReference type="ChEBI" id="CHEBI:29105"/>
    </ligand>
</feature>
<feature type="binding site" evidence="1">
    <location>
        <position position="401"/>
    </location>
    <ligand>
        <name>Zn(2+)</name>
        <dbReference type="ChEBI" id="CHEBI:29105"/>
    </ligand>
</feature>
<dbReference type="EC" id="3.4.11.-" evidence="1"/>
<dbReference type="EMBL" id="AE016853">
    <property type="protein sequence ID" value="AAO57342.1"/>
    <property type="molecule type" value="Genomic_DNA"/>
</dbReference>
<dbReference type="RefSeq" id="NP_793647.1">
    <property type="nucleotide sequence ID" value="NC_004578.1"/>
</dbReference>
<dbReference type="RefSeq" id="WP_011104764.1">
    <property type="nucleotide sequence ID" value="NC_004578.1"/>
</dbReference>
<dbReference type="SMR" id="Q87YC5"/>
<dbReference type="STRING" id="223283.PSPTO_3876"/>
<dbReference type="GeneID" id="1185547"/>
<dbReference type="KEGG" id="pst:PSPTO_3876"/>
<dbReference type="PATRIC" id="fig|223283.9.peg.3974"/>
<dbReference type="eggNOG" id="COG1362">
    <property type="taxonomic scope" value="Bacteria"/>
</dbReference>
<dbReference type="HOGENOM" id="CLU_019532_2_0_6"/>
<dbReference type="OrthoDB" id="5288740at2"/>
<dbReference type="PhylomeDB" id="Q87YC5"/>
<dbReference type="Proteomes" id="UP000002515">
    <property type="component" value="Chromosome"/>
</dbReference>
<dbReference type="GO" id="GO:0005737">
    <property type="term" value="C:cytoplasm"/>
    <property type="evidence" value="ECO:0007669"/>
    <property type="project" value="UniProtKB-ARBA"/>
</dbReference>
<dbReference type="GO" id="GO:0004177">
    <property type="term" value="F:aminopeptidase activity"/>
    <property type="evidence" value="ECO:0007669"/>
    <property type="project" value="UniProtKB-UniRule"/>
</dbReference>
<dbReference type="GO" id="GO:0008237">
    <property type="term" value="F:metallopeptidase activity"/>
    <property type="evidence" value="ECO:0007669"/>
    <property type="project" value="UniProtKB-UniRule"/>
</dbReference>
<dbReference type="GO" id="GO:0008270">
    <property type="term" value="F:zinc ion binding"/>
    <property type="evidence" value="ECO:0007669"/>
    <property type="project" value="UniProtKB-UniRule"/>
</dbReference>
<dbReference type="GO" id="GO:0006508">
    <property type="term" value="P:proteolysis"/>
    <property type="evidence" value="ECO:0007669"/>
    <property type="project" value="UniProtKB-UniRule"/>
</dbReference>
<dbReference type="CDD" id="cd05658">
    <property type="entry name" value="M18_DAP"/>
    <property type="match status" value="1"/>
</dbReference>
<dbReference type="FunFam" id="2.30.250.10:FF:000003">
    <property type="entry name" value="Probable M18 family aminopeptidase 2"/>
    <property type="match status" value="1"/>
</dbReference>
<dbReference type="Gene3D" id="2.30.250.10">
    <property type="entry name" value="Aminopeptidase i, Domain 2"/>
    <property type="match status" value="1"/>
</dbReference>
<dbReference type="Gene3D" id="3.40.630.10">
    <property type="entry name" value="Zn peptidases"/>
    <property type="match status" value="1"/>
</dbReference>
<dbReference type="HAMAP" id="MF_00467">
    <property type="entry name" value="Aminopeptidase_M18_2"/>
    <property type="match status" value="1"/>
</dbReference>
<dbReference type="InterPro" id="IPR022984">
    <property type="entry name" value="M18_aminopeptidase_2"/>
</dbReference>
<dbReference type="InterPro" id="IPR001948">
    <property type="entry name" value="Peptidase_M18"/>
</dbReference>
<dbReference type="InterPro" id="IPR023358">
    <property type="entry name" value="Peptidase_M18_dom2"/>
</dbReference>
<dbReference type="NCBIfam" id="NF002759">
    <property type="entry name" value="PRK02813.1"/>
    <property type="match status" value="1"/>
</dbReference>
<dbReference type="PANTHER" id="PTHR28570">
    <property type="entry name" value="ASPARTYL AMINOPEPTIDASE"/>
    <property type="match status" value="1"/>
</dbReference>
<dbReference type="PANTHER" id="PTHR28570:SF3">
    <property type="entry name" value="ASPARTYL AMINOPEPTIDASE"/>
    <property type="match status" value="1"/>
</dbReference>
<dbReference type="Pfam" id="PF02127">
    <property type="entry name" value="Peptidase_M18"/>
    <property type="match status" value="1"/>
</dbReference>
<dbReference type="PRINTS" id="PR00932">
    <property type="entry name" value="AMINO1PTASE"/>
</dbReference>
<dbReference type="SUPFAM" id="SSF101821">
    <property type="entry name" value="Aminopeptidase/glucanase lid domain"/>
    <property type="match status" value="1"/>
</dbReference>
<dbReference type="SUPFAM" id="SSF53187">
    <property type="entry name" value="Zn-dependent exopeptidases"/>
    <property type="match status" value="1"/>
</dbReference>